<accession>Q5L9P3</accession>
<dbReference type="EC" id="2.5.1.7" evidence="1"/>
<dbReference type="EMBL" id="CR626927">
    <property type="protein sequence ID" value="CAH09184.1"/>
    <property type="molecule type" value="Genomic_DNA"/>
</dbReference>
<dbReference type="RefSeq" id="WP_005790583.1">
    <property type="nucleotide sequence ID" value="NZ_UFTH01000001.1"/>
</dbReference>
<dbReference type="SMR" id="Q5L9P3"/>
<dbReference type="PaxDb" id="272559-BF9343_3403"/>
<dbReference type="GeneID" id="60367263"/>
<dbReference type="KEGG" id="bfs:BF9343_3403"/>
<dbReference type="eggNOG" id="COG0766">
    <property type="taxonomic scope" value="Bacteria"/>
</dbReference>
<dbReference type="HOGENOM" id="CLU_027387_0_1_10"/>
<dbReference type="UniPathway" id="UPA00219"/>
<dbReference type="Proteomes" id="UP000006731">
    <property type="component" value="Chromosome"/>
</dbReference>
<dbReference type="GO" id="GO:0005737">
    <property type="term" value="C:cytoplasm"/>
    <property type="evidence" value="ECO:0007669"/>
    <property type="project" value="UniProtKB-SubCell"/>
</dbReference>
<dbReference type="GO" id="GO:0008760">
    <property type="term" value="F:UDP-N-acetylglucosamine 1-carboxyvinyltransferase activity"/>
    <property type="evidence" value="ECO:0007669"/>
    <property type="project" value="UniProtKB-UniRule"/>
</dbReference>
<dbReference type="GO" id="GO:0051301">
    <property type="term" value="P:cell division"/>
    <property type="evidence" value="ECO:0007669"/>
    <property type="project" value="UniProtKB-KW"/>
</dbReference>
<dbReference type="GO" id="GO:0071555">
    <property type="term" value="P:cell wall organization"/>
    <property type="evidence" value="ECO:0007669"/>
    <property type="project" value="UniProtKB-KW"/>
</dbReference>
<dbReference type="GO" id="GO:0009252">
    <property type="term" value="P:peptidoglycan biosynthetic process"/>
    <property type="evidence" value="ECO:0007669"/>
    <property type="project" value="UniProtKB-UniRule"/>
</dbReference>
<dbReference type="GO" id="GO:0008360">
    <property type="term" value="P:regulation of cell shape"/>
    <property type="evidence" value="ECO:0007669"/>
    <property type="project" value="UniProtKB-KW"/>
</dbReference>
<dbReference type="GO" id="GO:0019277">
    <property type="term" value="P:UDP-N-acetylgalactosamine biosynthetic process"/>
    <property type="evidence" value="ECO:0007669"/>
    <property type="project" value="InterPro"/>
</dbReference>
<dbReference type="CDD" id="cd01555">
    <property type="entry name" value="UdpNAET"/>
    <property type="match status" value="1"/>
</dbReference>
<dbReference type="Gene3D" id="3.65.10.10">
    <property type="entry name" value="Enolpyruvate transferase domain"/>
    <property type="match status" value="2"/>
</dbReference>
<dbReference type="HAMAP" id="MF_00111">
    <property type="entry name" value="MurA"/>
    <property type="match status" value="1"/>
</dbReference>
<dbReference type="InterPro" id="IPR001986">
    <property type="entry name" value="Enolpyruvate_Tfrase_dom"/>
</dbReference>
<dbReference type="InterPro" id="IPR036968">
    <property type="entry name" value="Enolpyruvate_Tfrase_sf"/>
</dbReference>
<dbReference type="InterPro" id="IPR050068">
    <property type="entry name" value="MurA_subfamily"/>
</dbReference>
<dbReference type="InterPro" id="IPR013792">
    <property type="entry name" value="RNA3'P_cycl/enolpyr_Trfase_a/b"/>
</dbReference>
<dbReference type="InterPro" id="IPR005750">
    <property type="entry name" value="UDP_GlcNAc_COvinyl_MurA"/>
</dbReference>
<dbReference type="NCBIfam" id="TIGR01072">
    <property type="entry name" value="murA"/>
    <property type="match status" value="1"/>
</dbReference>
<dbReference type="NCBIfam" id="NF006873">
    <property type="entry name" value="PRK09369.1"/>
    <property type="match status" value="1"/>
</dbReference>
<dbReference type="PANTHER" id="PTHR43783">
    <property type="entry name" value="UDP-N-ACETYLGLUCOSAMINE 1-CARBOXYVINYLTRANSFERASE"/>
    <property type="match status" value="1"/>
</dbReference>
<dbReference type="PANTHER" id="PTHR43783:SF1">
    <property type="entry name" value="UDP-N-ACETYLGLUCOSAMINE 1-CARBOXYVINYLTRANSFERASE"/>
    <property type="match status" value="1"/>
</dbReference>
<dbReference type="Pfam" id="PF00275">
    <property type="entry name" value="EPSP_synthase"/>
    <property type="match status" value="1"/>
</dbReference>
<dbReference type="SUPFAM" id="SSF55205">
    <property type="entry name" value="EPT/RTPC-like"/>
    <property type="match status" value="1"/>
</dbReference>
<proteinExistence type="inferred from homology"/>
<evidence type="ECO:0000255" key="1">
    <source>
        <dbReference type="HAMAP-Rule" id="MF_00111"/>
    </source>
</evidence>
<name>MURA_BACFN</name>
<comment type="function">
    <text evidence="1">Cell wall formation. Adds enolpyruvyl to UDP-N-acetylglucosamine.</text>
</comment>
<comment type="catalytic activity">
    <reaction evidence="1">
        <text>phosphoenolpyruvate + UDP-N-acetyl-alpha-D-glucosamine = UDP-N-acetyl-3-O-(1-carboxyvinyl)-alpha-D-glucosamine + phosphate</text>
        <dbReference type="Rhea" id="RHEA:18681"/>
        <dbReference type="ChEBI" id="CHEBI:43474"/>
        <dbReference type="ChEBI" id="CHEBI:57705"/>
        <dbReference type="ChEBI" id="CHEBI:58702"/>
        <dbReference type="ChEBI" id="CHEBI:68483"/>
        <dbReference type="EC" id="2.5.1.7"/>
    </reaction>
</comment>
<comment type="pathway">
    <text evidence="1">Cell wall biogenesis; peptidoglycan biosynthesis.</text>
</comment>
<comment type="subcellular location">
    <subcellularLocation>
        <location evidence="1">Cytoplasm</location>
    </subcellularLocation>
</comment>
<comment type="similarity">
    <text evidence="1">Belongs to the EPSP synthase family. MurA subfamily.</text>
</comment>
<reference key="1">
    <citation type="journal article" date="2005" name="Science">
        <title>Extensive DNA inversions in the B. fragilis genome control variable gene expression.</title>
        <authorList>
            <person name="Cerdeno-Tarraga A.-M."/>
            <person name="Patrick S."/>
            <person name="Crossman L.C."/>
            <person name="Blakely G."/>
            <person name="Abratt V."/>
            <person name="Lennard N."/>
            <person name="Poxton I."/>
            <person name="Duerden B."/>
            <person name="Harris B."/>
            <person name="Quail M.A."/>
            <person name="Barron A."/>
            <person name="Clark L."/>
            <person name="Corton C."/>
            <person name="Doggett J."/>
            <person name="Holden M.T.G."/>
            <person name="Larke N."/>
            <person name="Line A."/>
            <person name="Lord A."/>
            <person name="Norbertczak H."/>
            <person name="Ormond D."/>
            <person name="Price C."/>
            <person name="Rabbinowitsch E."/>
            <person name="Woodward J."/>
            <person name="Barrell B.G."/>
            <person name="Parkhill J."/>
        </authorList>
    </citation>
    <scope>NUCLEOTIDE SEQUENCE [LARGE SCALE GENOMIC DNA]</scope>
    <source>
        <strain>ATCC 25285 / DSM 2151 / CCUG 4856 / JCM 11019 / LMG 10263 / NCTC 9343 / Onslow / VPI 2553 / EN-2</strain>
    </source>
</reference>
<organism>
    <name type="scientific">Bacteroides fragilis (strain ATCC 25285 / DSM 2151 / CCUG 4856 / JCM 11019 / LMG 10263 / NCTC 9343 / Onslow / VPI 2553 / EN-2)</name>
    <dbReference type="NCBI Taxonomy" id="272559"/>
    <lineage>
        <taxon>Bacteria</taxon>
        <taxon>Pseudomonadati</taxon>
        <taxon>Bacteroidota</taxon>
        <taxon>Bacteroidia</taxon>
        <taxon>Bacteroidales</taxon>
        <taxon>Bacteroidaceae</taxon>
        <taxon>Bacteroides</taxon>
    </lineage>
</organism>
<gene>
    <name evidence="1" type="primary">murA</name>
    <name type="ordered locus">BF3495</name>
</gene>
<protein>
    <recommendedName>
        <fullName evidence="1">UDP-N-acetylglucosamine 1-carboxyvinyltransferase</fullName>
        <ecNumber evidence="1">2.5.1.7</ecNumber>
    </recommendedName>
    <alternativeName>
        <fullName evidence="1">Enoylpyruvate transferase</fullName>
    </alternativeName>
    <alternativeName>
        <fullName evidence="1">UDP-N-acetylglucosamine enolpyruvyl transferase</fullName>
        <shortName evidence="1">EPT</shortName>
    </alternativeName>
</protein>
<feature type="chain" id="PRO_0000231167" description="UDP-N-acetylglucosamine 1-carboxyvinyltransferase">
    <location>
        <begin position="1"/>
        <end position="434"/>
    </location>
</feature>
<feature type="active site" description="Proton donor" evidence="1">
    <location>
        <position position="121"/>
    </location>
</feature>
<feature type="binding site" evidence="1">
    <location>
        <begin position="22"/>
        <end position="23"/>
    </location>
    <ligand>
        <name>phosphoenolpyruvate</name>
        <dbReference type="ChEBI" id="CHEBI:58702"/>
    </ligand>
</feature>
<feature type="binding site" evidence="1">
    <location>
        <position position="97"/>
    </location>
    <ligand>
        <name>UDP-N-acetyl-alpha-D-glucosamine</name>
        <dbReference type="ChEBI" id="CHEBI:57705"/>
    </ligand>
</feature>
<feature type="binding site" evidence="1">
    <location>
        <position position="319"/>
    </location>
    <ligand>
        <name>UDP-N-acetyl-alpha-D-glucosamine</name>
        <dbReference type="ChEBI" id="CHEBI:57705"/>
    </ligand>
</feature>
<feature type="binding site" evidence="1">
    <location>
        <position position="341"/>
    </location>
    <ligand>
        <name>UDP-N-acetyl-alpha-D-glucosamine</name>
        <dbReference type="ChEBI" id="CHEBI:57705"/>
    </ligand>
</feature>
<sequence>MASFVIEGGHRLSGEIHPQGAKNEVLQIICATLLTAEEVTVNNIPDILDVNNLIQLMRDMGVTVAKTGVDSYSFKAANVDLAYLESDNFLKKCSSLRGSVMLIGPMVARFGKAMISKPGGDKIGRRRLDTHFIGIQNLGADFTYNEEREIYEISAEELKGTSMLLDEASVTGTANIVMAAVLAKGKTTIYNAACEPYLQQLCKMLNRMGAKISGIASNLLTIEGVEELHGTDHTVLPDMIEVGSFIGMAAMTRSEITIKNVSYENLGIIPESFRRLGIKLEQRGDDIFVPAQDCYQIESFIDGSIMTIADAPWPGLTPDLLSVMLVVATQAKGSVLIHQKMFESRLFFVDKLIDMGAQIILCDPHRAVVIGHNHGFTLRGGNMTSPDIRAGIALLIAAMSAEGISRIHNIEQIDRGYQNIEGRLNAIGARITRI</sequence>
<keyword id="KW-0131">Cell cycle</keyword>
<keyword id="KW-0132">Cell division</keyword>
<keyword id="KW-0133">Cell shape</keyword>
<keyword id="KW-0961">Cell wall biogenesis/degradation</keyword>
<keyword id="KW-0963">Cytoplasm</keyword>
<keyword id="KW-0573">Peptidoglycan synthesis</keyword>
<keyword id="KW-0808">Transferase</keyword>